<gene>
    <name evidence="1" type="primary">rpsH</name>
    <name type="ordered locus">CCNA_01320</name>
</gene>
<organism>
    <name type="scientific">Caulobacter vibrioides (strain NA1000 / CB15N)</name>
    <name type="common">Caulobacter crescentus</name>
    <dbReference type="NCBI Taxonomy" id="565050"/>
    <lineage>
        <taxon>Bacteria</taxon>
        <taxon>Pseudomonadati</taxon>
        <taxon>Pseudomonadota</taxon>
        <taxon>Alphaproteobacteria</taxon>
        <taxon>Caulobacterales</taxon>
        <taxon>Caulobacteraceae</taxon>
        <taxon>Caulobacter</taxon>
    </lineage>
</organism>
<accession>B8H4E8</accession>
<comment type="function">
    <text evidence="1">One of the primary rRNA binding proteins, it binds directly to 16S rRNA central domain where it helps coordinate assembly of the platform of the 30S subunit.</text>
</comment>
<comment type="subunit">
    <text evidence="1">Part of the 30S ribosomal subunit. Contacts proteins S5 and S12.</text>
</comment>
<comment type="similarity">
    <text evidence="1">Belongs to the universal ribosomal protein uS8 family.</text>
</comment>
<name>RS8_CAUVN</name>
<sequence>MSMNDPLSDMIARIKNAAQRKRSKVSTPASKLRARVLDVLADEGYIRGYSLVEKPGAFPEFEIELKYFDGEPVIAEISRVSKPGRRVYSSIKDLKPIKNGLGISILSTPKGVMSDTAARDANVGGEVLCRVY</sequence>
<keyword id="KW-1185">Reference proteome</keyword>
<keyword id="KW-0687">Ribonucleoprotein</keyword>
<keyword id="KW-0689">Ribosomal protein</keyword>
<keyword id="KW-0694">RNA-binding</keyword>
<keyword id="KW-0699">rRNA-binding</keyword>
<protein>
    <recommendedName>
        <fullName evidence="1">Small ribosomal subunit protein uS8</fullName>
    </recommendedName>
    <alternativeName>
        <fullName evidence="2">30S ribosomal protein S8</fullName>
    </alternativeName>
</protein>
<feature type="chain" id="PRO_1000165316" description="Small ribosomal subunit protein uS8">
    <location>
        <begin position="1"/>
        <end position="132"/>
    </location>
</feature>
<reference key="1">
    <citation type="journal article" date="2010" name="J. Bacteriol.">
        <title>The genetic basis of laboratory adaptation in Caulobacter crescentus.</title>
        <authorList>
            <person name="Marks M.E."/>
            <person name="Castro-Rojas C.M."/>
            <person name="Teiling C."/>
            <person name="Du L."/>
            <person name="Kapatral V."/>
            <person name="Walunas T.L."/>
            <person name="Crosson S."/>
        </authorList>
    </citation>
    <scope>NUCLEOTIDE SEQUENCE [LARGE SCALE GENOMIC DNA]</scope>
    <source>
        <strain>NA1000 / CB15N</strain>
    </source>
</reference>
<dbReference type="EMBL" id="CP001340">
    <property type="protein sequence ID" value="ACL94785.1"/>
    <property type="molecule type" value="Genomic_DNA"/>
</dbReference>
<dbReference type="RefSeq" id="WP_010919141.1">
    <property type="nucleotide sequence ID" value="NC_011916.1"/>
</dbReference>
<dbReference type="RefSeq" id="YP_002516693.3">
    <property type="nucleotide sequence ID" value="NC_011916.1"/>
</dbReference>
<dbReference type="SMR" id="B8H4E8"/>
<dbReference type="GeneID" id="7333052"/>
<dbReference type="KEGG" id="ccs:CCNA_01320"/>
<dbReference type="PATRIC" id="fig|565050.3.peg.1304"/>
<dbReference type="HOGENOM" id="CLU_098428_0_0_5"/>
<dbReference type="OrthoDB" id="9802617at2"/>
<dbReference type="PhylomeDB" id="B8H4E8"/>
<dbReference type="Proteomes" id="UP000001364">
    <property type="component" value="Chromosome"/>
</dbReference>
<dbReference type="GO" id="GO:1990904">
    <property type="term" value="C:ribonucleoprotein complex"/>
    <property type="evidence" value="ECO:0007669"/>
    <property type="project" value="UniProtKB-KW"/>
</dbReference>
<dbReference type="GO" id="GO:0005840">
    <property type="term" value="C:ribosome"/>
    <property type="evidence" value="ECO:0007669"/>
    <property type="project" value="UniProtKB-KW"/>
</dbReference>
<dbReference type="GO" id="GO:0019843">
    <property type="term" value="F:rRNA binding"/>
    <property type="evidence" value="ECO:0007669"/>
    <property type="project" value="UniProtKB-UniRule"/>
</dbReference>
<dbReference type="GO" id="GO:0003735">
    <property type="term" value="F:structural constituent of ribosome"/>
    <property type="evidence" value="ECO:0007669"/>
    <property type="project" value="InterPro"/>
</dbReference>
<dbReference type="GO" id="GO:0006412">
    <property type="term" value="P:translation"/>
    <property type="evidence" value="ECO:0007669"/>
    <property type="project" value="UniProtKB-UniRule"/>
</dbReference>
<dbReference type="FunFam" id="3.30.1490.10:FF:000001">
    <property type="entry name" value="30S ribosomal protein S8"/>
    <property type="match status" value="1"/>
</dbReference>
<dbReference type="Gene3D" id="3.30.1370.30">
    <property type="match status" value="1"/>
</dbReference>
<dbReference type="Gene3D" id="3.30.1490.10">
    <property type="match status" value="1"/>
</dbReference>
<dbReference type="HAMAP" id="MF_01302_B">
    <property type="entry name" value="Ribosomal_uS8_B"/>
    <property type="match status" value="1"/>
</dbReference>
<dbReference type="InterPro" id="IPR000630">
    <property type="entry name" value="Ribosomal_uS8"/>
</dbReference>
<dbReference type="InterPro" id="IPR047863">
    <property type="entry name" value="Ribosomal_uS8_CS"/>
</dbReference>
<dbReference type="InterPro" id="IPR035987">
    <property type="entry name" value="Ribosomal_uS8_sf"/>
</dbReference>
<dbReference type="NCBIfam" id="NF001109">
    <property type="entry name" value="PRK00136.1"/>
    <property type="match status" value="1"/>
</dbReference>
<dbReference type="PANTHER" id="PTHR11758">
    <property type="entry name" value="40S RIBOSOMAL PROTEIN S15A"/>
    <property type="match status" value="1"/>
</dbReference>
<dbReference type="Pfam" id="PF00410">
    <property type="entry name" value="Ribosomal_S8"/>
    <property type="match status" value="1"/>
</dbReference>
<dbReference type="SUPFAM" id="SSF56047">
    <property type="entry name" value="Ribosomal protein S8"/>
    <property type="match status" value="1"/>
</dbReference>
<dbReference type="PROSITE" id="PS00053">
    <property type="entry name" value="RIBOSOMAL_S8"/>
    <property type="match status" value="1"/>
</dbReference>
<evidence type="ECO:0000255" key="1">
    <source>
        <dbReference type="HAMAP-Rule" id="MF_01302"/>
    </source>
</evidence>
<evidence type="ECO:0000305" key="2"/>
<proteinExistence type="inferred from homology"/>